<protein>
    <recommendedName>
        <fullName evidence="3">Putative amino acid/polyamine transporter MPH_07630_2</fullName>
    </recommendedName>
</protein>
<name>AAPT1_MACPH</name>
<sequence>MIGFSFSIVTSWSALSGVLVVGVESGGPPVMIWSWVGVCAVSLAVAYSMAEMCSAYPVAGGQYSWVAILAPKKWARGLSYVCGWFMLIGILSMGAVNNFIAGNFVLGMANLTYPEYTIERWHAVLVAYLICIVAALSSIFLPHLLNRISKAILIWNICSFFICFITILATNDHKQPASFVFADFQNSTGFNKAYAAIIGILQSAFGMCCYDAPAHMTEEIKDARKQAPRAIVMSVWLGFLTGFVFLISLCFCMGGIDETASTPTGVPLIAIFHNSTGSVAGTCALTSLITVVALVCANSLMTEGGRAVYAFARDRGLPFSRALSRVHPTLGVPVAGILATAAVQAAFNSIYFGTVTGFNTVISIATEGFYVSYAIPLLVRILSRVSGDKRERLDGPYSLGRWGLLANVVGFTYLAFAVITFNFPTVDPVDKENMNYTSAASFKFIQDISNQAE</sequence>
<comment type="subcellular location">
    <subcellularLocation>
        <location evidence="1">Membrane</location>
        <topology evidence="1">Multi-pass membrane protein</topology>
    </subcellularLocation>
</comment>
<comment type="similarity">
    <text evidence="3">Belongs to the amino acid-polyamine-organocation (APC) superfamily.</text>
</comment>
<comment type="sequence caution" evidence="3">
    <conflict type="erroneous gene model prediction">
        <sequence resource="EMBL-CDS" id="EKG15183"/>
    </conflict>
    <text>The predicted gene MPH_07630 has been split into 2 genes: mpsG/MPH_07630_1 and MPH_07630_2.</text>
</comment>
<reference key="1">
    <citation type="journal article" date="2012" name="BMC Genomics">
        <title>Tools to kill: Genome of one of the most destructive plant pathogenic fungi Macrophomina phaseolina.</title>
        <authorList>
            <person name="Islam M.S."/>
            <person name="Haque M.S."/>
            <person name="Islam M.M."/>
            <person name="Emdad E.M."/>
            <person name="Halim A."/>
            <person name="Hossen Q.M.M."/>
            <person name="Hossain M.Z."/>
            <person name="Ahmed B."/>
            <person name="Rahim S."/>
            <person name="Rahman M.S."/>
            <person name="Alam M.M."/>
            <person name="Hou S."/>
            <person name="Wan X."/>
            <person name="Saito J.A."/>
            <person name="Alam M."/>
        </authorList>
    </citation>
    <scope>NUCLEOTIDE SEQUENCE [LARGE SCALE GENOMIC DNA]</scope>
    <source>
        <strain>MS6</strain>
    </source>
</reference>
<gene>
    <name type="ORF">MPH_07630_2</name>
</gene>
<keyword id="KW-0325">Glycoprotein</keyword>
<keyword id="KW-0472">Membrane</keyword>
<keyword id="KW-1185">Reference proteome</keyword>
<keyword id="KW-0812">Transmembrane</keyword>
<keyword id="KW-1133">Transmembrane helix</keyword>
<keyword id="KW-0813">Transport</keyword>
<proteinExistence type="inferred from homology"/>
<feature type="chain" id="PRO_0000457830" description="Putative amino acid/polyamine transporter MPH_07630_2">
    <location>
        <begin position="1"/>
        <end position="453"/>
    </location>
</feature>
<feature type="transmembrane region" description="Helical" evidence="1">
    <location>
        <begin position="2"/>
        <end position="21"/>
    </location>
</feature>
<feature type="transmembrane region" description="Helical" evidence="1">
    <location>
        <begin position="30"/>
        <end position="50"/>
    </location>
</feature>
<feature type="transmembrane region" description="Helical" evidence="1">
    <location>
        <begin position="81"/>
        <end position="101"/>
    </location>
</feature>
<feature type="transmembrane region" description="Helical" evidence="1">
    <location>
        <begin position="121"/>
        <end position="141"/>
    </location>
</feature>
<feature type="transmembrane region" description="Helical" evidence="1">
    <location>
        <begin position="151"/>
        <end position="171"/>
    </location>
</feature>
<feature type="transmembrane region" description="Helical" evidence="1">
    <location>
        <begin position="193"/>
        <end position="213"/>
    </location>
</feature>
<feature type="transmembrane region" description="Helical" evidence="1">
    <location>
        <begin position="231"/>
        <end position="251"/>
    </location>
</feature>
<feature type="transmembrane region" description="Helical" evidence="1">
    <location>
        <begin position="277"/>
        <end position="297"/>
    </location>
</feature>
<feature type="transmembrane region" description="Helical" evidence="1">
    <location>
        <begin position="330"/>
        <end position="350"/>
    </location>
</feature>
<feature type="transmembrane region" description="Helical" evidence="1">
    <location>
        <begin position="358"/>
        <end position="378"/>
    </location>
</feature>
<feature type="transmembrane region" description="Helical" evidence="1">
    <location>
        <begin position="403"/>
        <end position="423"/>
    </location>
</feature>
<feature type="glycosylation site" description="N-linked (GlcNAc...) asparagine" evidence="2">
    <location>
        <position position="110"/>
    </location>
</feature>
<feature type="glycosylation site" description="N-linked (GlcNAc...) asparagine" evidence="2">
    <location>
        <position position="186"/>
    </location>
</feature>
<feature type="glycosylation site" description="N-linked (GlcNAc...) asparagine" evidence="2">
    <location>
        <position position="274"/>
    </location>
</feature>
<feature type="glycosylation site" description="N-linked (GlcNAc...) asparagine" evidence="2">
    <location>
        <position position="435"/>
    </location>
</feature>
<evidence type="ECO:0000255" key="1"/>
<evidence type="ECO:0000255" key="2">
    <source>
        <dbReference type="PROSITE-ProRule" id="PRU00498"/>
    </source>
</evidence>
<evidence type="ECO:0000305" key="3"/>
<organism>
    <name type="scientific">Macrophomina phaseolina (strain MS6)</name>
    <name type="common">Charcoal rot fungus</name>
    <dbReference type="NCBI Taxonomy" id="1126212"/>
    <lineage>
        <taxon>Eukaryota</taxon>
        <taxon>Fungi</taxon>
        <taxon>Dikarya</taxon>
        <taxon>Ascomycota</taxon>
        <taxon>Pezizomycotina</taxon>
        <taxon>Dothideomycetes</taxon>
        <taxon>Dothideomycetes incertae sedis</taxon>
        <taxon>Botryosphaeriales</taxon>
        <taxon>Botryosphaeriaceae</taxon>
        <taxon>Macrophomina</taxon>
    </lineage>
</organism>
<dbReference type="EMBL" id="AHHD01000324">
    <property type="protein sequence ID" value="EKG15183.1"/>
    <property type="status" value="ALT_SEQ"/>
    <property type="molecule type" value="Genomic_DNA"/>
</dbReference>
<dbReference type="SMR" id="P0DTN6"/>
<dbReference type="HOGENOM" id="CLU_336176_0_0_1"/>
<dbReference type="OrthoDB" id="3257095at2759"/>
<dbReference type="Proteomes" id="UP000007129">
    <property type="component" value="Unassembled WGS sequence"/>
</dbReference>
<dbReference type="GO" id="GO:0016020">
    <property type="term" value="C:membrane"/>
    <property type="evidence" value="ECO:0007669"/>
    <property type="project" value="UniProtKB-SubCell"/>
</dbReference>
<dbReference type="GO" id="GO:0022857">
    <property type="term" value="F:transmembrane transporter activity"/>
    <property type="evidence" value="ECO:0007669"/>
    <property type="project" value="InterPro"/>
</dbReference>
<dbReference type="GO" id="GO:0006865">
    <property type="term" value="P:amino acid transport"/>
    <property type="evidence" value="ECO:0007669"/>
    <property type="project" value="InterPro"/>
</dbReference>
<dbReference type="Gene3D" id="1.20.1740.10">
    <property type="entry name" value="Amino acid/polyamine transporter I"/>
    <property type="match status" value="1"/>
</dbReference>
<dbReference type="InterPro" id="IPR002293">
    <property type="entry name" value="AA/rel_permease1"/>
</dbReference>
<dbReference type="InterPro" id="IPR004840">
    <property type="entry name" value="Amino_acid_permease_CS"/>
</dbReference>
<dbReference type="PANTHER" id="PTHR45649">
    <property type="entry name" value="AMINO-ACID PERMEASE BAT1"/>
    <property type="match status" value="1"/>
</dbReference>
<dbReference type="PANTHER" id="PTHR45649:SF8">
    <property type="entry name" value="PERMEASE, PUTATIVE-RELATED"/>
    <property type="match status" value="1"/>
</dbReference>
<dbReference type="Pfam" id="PF13520">
    <property type="entry name" value="AA_permease_2"/>
    <property type="match status" value="1"/>
</dbReference>
<dbReference type="PIRSF" id="PIRSF006060">
    <property type="entry name" value="AA_transporter"/>
    <property type="match status" value="1"/>
</dbReference>
<dbReference type="PROSITE" id="PS00218">
    <property type="entry name" value="AMINO_ACID_PERMEASE_1"/>
    <property type="match status" value="1"/>
</dbReference>
<accession>P0DTN6</accession>
<accession>K2RKI1</accession>